<dbReference type="EC" id="4.2.1.11" evidence="1"/>
<dbReference type="EMBL" id="CP001620">
    <property type="protein sequence ID" value="ACR17322.1"/>
    <property type="molecule type" value="Genomic_DNA"/>
</dbReference>
<dbReference type="RefSeq" id="WP_012731209.1">
    <property type="nucleotide sequence ID" value="NC_012704.1"/>
</dbReference>
<dbReference type="SMR" id="C4LHL7"/>
<dbReference type="STRING" id="645127.ckrop_0551"/>
<dbReference type="GeneID" id="92727132"/>
<dbReference type="KEGG" id="ckp:ckrop_0551"/>
<dbReference type="eggNOG" id="COG0148">
    <property type="taxonomic scope" value="Bacteria"/>
</dbReference>
<dbReference type="HOGENOM" id="CLU_031223_2_1_11"/>
<dbReference type="OrthoDB" id="9804716at2"/>
<dbReference type="UniPathway" id="UPA00109">
    <property type="reaction ID" value="UER00187"/>
</dbReference>
<dbReference type="Proteomes" id="UP000001473">
    <property type="component" value="Chromosome"/>
</dbReference>
<dbReference type="GO" id="GO:0009986">
    <property type="term" value="C:cell surface"/>
    <property type="evidence" value="ECO:0007669"/>
    <property type="project" value="UniProtKB-SubCell"/>
</dbReference>
<dbReference type="GO" id="GO:0005576">
    <property type="term" value="C:extracellular region"/>
    <property type="evidence" value="ECO:0007669"/>
    <property type="project" value="UniProtKB-SubCell"/>
</dbReference>
<dbReference type="GO" id="GO:0000015">
    <property type="term" value="C:phosphopyruvate hydratase complex"/>
    <property type="evidence" value="ECO:0007669"/>
    <property type="project" value="InterPro"/>
</dbReference>
<dbReference type="GO" id="GO:0000287">
    <property type="term" value="F:magnesium ion binding"/>
    <property type="evidence" value="ECO:0007669"/>
    <property type="project" value="UniProtKB-UniRule"/>
</dbReference>
<dbReference type="GO" id="GO:0004634">
    <property type="term" value="F:phosphopyruvate hydratase activity"/>
    <property type="evidence" value="ECO:0007669"/>
    <property type="project" value="UniProtKB-UniRule"/>
</dbReference>
<dbReference type="GO" id="GO:0006096">
    <property type="term" value="P:glycolytic process"/>
    <property type="evidence" value="ECO:0007669"/>
    <property type="project" value="UniProtKB-UniRule"/>
</dbReference>
<dbReference type="CDD" id="cd03313">
    <property type="entry name" value="enolase"/>
    <property type="match status" value="1"/>
</dbReference>
<dbReference type="FunFam" id="3.20.20.120:FF:000001">
    <property type="entry name" value="Enolase"/>
    <property type="match status" value="1"/>
</dbReference>
<dbReference type="FunFam" id="3.30.390.10:FF:000001">
    <property type="entry name" value="Enolase"/>
    <property type="match status" value="1"/>
</dbReference>
<dbReference type="Gene3D" id="3.20.20.120">
    <property type="entry name" value="Enolase-like C-terminal domain"/>
    <property type="match status" value="1"/>
</dbReference>
<dbReference type="Gene3D" id="3.30.390.10">
    <property type="entry name" value="Enolase-like, N-terminal domain"/>
    <property type="match status" value="1"/>
</dbReference>
<dbReference type="HAMAP" id="MF_00318">
    <property type="entry name" value="Enolase"/>
    <property type="match status" value="1"/>
</dbReference>
<dbReference type="InterPro" id="IPR000941">
    <property type="entry name" value="Enolase"/>
</dbReference>
<dbReference type="InterPro" id="IPR036849">
    <property type="entry name" value="Enolase-like_C_sf"/>
</dbReference>
<dbReference type="InterPro" id="IPR029017">
    <property type="entry name" value="Enolase-like_N"/>
</dbReference>
<dbReference type="InterPro" id="IPR020810">
    <property type="entry name" value="Enolase_C"/>
</dbReference>
<dbReference type="InterPro" id="IPR020809">
    <property type="entry name" value="Enolase_CS"/>
</dbReference>
<dbReference type="InterPro" id="IPR020811">
    <property type="entry name" value="Enolase_N"/>
</dbReference>
<dbReference type="NCBIfam" id="TIGR01060">
    <property type="entry name" value="eno"/>
    <property type="match status" value="1"/>
</dbReference>
<dbReference type="PANTHER" id="PTHR11902">
    <property type="entry name" value="ENOLASE"/>
    <property type="match status" value="1"/>
</dbReference>
<dbReference type="PANTHER" id="PTHR11902:SF1">
    <property type="entry name" value="ENOLASE"/>
    <property type="match status" value="1"/>
</dbReference>
<dbReference type="Pfam" id="PF00113">
    <property type="entry name" value="Enolase_C"/>
    <property type="match status" value="1"/>
</dbReference>
<dbReference type="Pfam" id="PF03952">
    <property type="entry name" value="Enolase_N"/>
    <property type="match status" value="1"/>
</dbReference>
<dbReference type="PIRSF" id="PIRSF001400">
    <property type="entry name" value="Enolase"/>
    <property type="match status" value="1"/>
</dbReference>
<dbReference type="PRINTS" id="PR00148">
    <property type="entry name" value="ENOLASE"/>
</dbReference>
<dbReference type="SFLD" id="SFLDS00001">
    <property type="entry name" value="Enolase"/>
    <property type="match status" value="1"/>
</dbReference>
<dbReference type="SFLD" id="SFLDF00002">
    <property type="entry name" value="enolase"/>
    <property type="match status" value="1"/>
</dbReference>
<dbReference type="SMART" id="SM01192">
    <property type="entry name" value="Enolase_C"/>
    <property type="match status" value="1"/>
</dbReference>
<dbReference type="SMART" id="SM01193">
    <property type="entry name" value="Enolase_N"/>
    <property type="match status" value="1"/>
</dbReference>
<dbReference type="SUPFAM" id="SSF51604">
    <property type="entry name" value="Enolase C-terminal domain-like"/>
    <property type="match status" value="1"/>
</dbReference>
<dbReference type="SUPFAM" id="SSF54826">
    <property type="entry name" value="Enolase N-terminal domain-like"/>
    <property type="match status" value="1"/>
</dbReference>
<dbReference type="PROSITE" id="PS00164">
    <property type="entry name" value="ENOLASE"/>
    <property type="match status" value="1"/>
</dbReference>
<sequence>MAQIIDVQAREILDSRGNPTVEVEVLLDDASFGRAGVPSGASTGVHEAHELRDGGDRYLGKGVRQAVENVNEKIAPAVTGLEADDQRLVDKVMLDLDGSDNKSNLGANAILGVSLATAKAAASSANLELFRYLGGPNAHVLPVPMMNIVNGGAHADSGVDVQEFMIAPIGADSFREALRMGAEVYHNLKSVIKSKGLSTGLGDEGGFAPSVDSTKEALDLIAEAVKKAGYKLGEDIAFALDAASSEFYDKDKGVYNFEGGEHSAEDMVKVYEELVENYPIVSIEDPLQEDDWEGYTKLTAEIGDKVQIVGDDFFVTNPARLKEGIEKKAANALLVKVNQIGSLSETADAVQLAQNNNYRCMMSHRSGETEDTTIADLSVAYSCGQIKSGAPARSERVAKYNQLLRIEEFLGDAAVYAGRSAFPRFNG</sequence>
<accession>C4LHL7</accession>
<proteinExistence type="inferred from homology"/>
<comment type="function">
    <text evidence="1">Catalyzes the reversible conversion of 2-phosphoglycerate (2-PG) into phosphoenolpyruvate (PEP). It is essential for the degradation of carbohydrates via glycolysis.</text>
</comment>
<comment type="catalytic activity">
    <reaction evidence="1">
        <text>(2R)-2-phosphoglycerate = phosphoenolpyruvate + H2O</text>
        <dbReference type="Rhea" id="RHEA:10164"/>
        <dbReference type="ChEBI" id="CHEBI:15377"/>
        <dbReference type="ChEBI" id="CHEBI:58289"/>
        <dbReference type="ChEBI" id="CHEBI:58702"/>
        <dbReference type="EC" id="4.2.1.11"/>
    </reaction>
</comment>
<comment type="cofactor">
    <cofactor evidence="1">
        <name>Mg(2+)</name>
        <dbReference type="ChEBI" id="CHEBI:18420"/>
    </cofactor>
    <text evidence="1">Binds a second Mg(2+) ion via substrate during catalysis.</text>
</comment>
<comment type="pathway">
    <text evidence="1">Carbohydrate degradation; glycolysis; pyruvate from D-glyceraldehyde 3-phosphate: step 4/5.</text>
</comment>
<comment type="subcellular location">
    <subcellularLocation>
        <location evidence="1">Cytoplasm</location>
    </subcellularLocation>
    <subcellularLocation>
        <location evidence="1">Secreted</location>
    </subcellularLocation>
    <subcellularLocation>
        <location evidence="1">Cell surface</location>
    </subcellularLocation>
    <text evidence="1">Fractions of enolase are present in both the cytoplasm and on the cell surface.</text>
</comment>
<comment type="similarity">
    <text evidence="1">Belongs to the enolase family.</text>
</comment>
<evidence type="ECO:0000255" key="1">
    <source>
        <dbReference type="HAMAP-Rule" id="MF_00318"/>
    </source>
</evidence>
<gene>
    <name evidence="1" type="primary">eno</name>
    <name type="ordered locus">ckrop_0551</name>
</gene>
<name>ENO_CORK4</name>
<keyword id="KW-0963">Cytoplasm</keyword>
<keyword id="KW-0324">Glycolysis</keyword>
<keyword id="KW-0456">Lyase</keyword>
<keyword id="KW-0460">Magnesium</keyword>
<keyword id="KW-0479">Metal-binding</keyword>
<keyword id="KW-1185">Reference proteome</keyword>
<keyword id="KW-0964">Secreted</keyword>
<reference key="1">
    <citation type="journal article" date="2008" name="J. Biotechnol.">
        <title>Ultrafast pyrosequencing of Corynebacterium kroppenstedtii DSM44385 revealed insights into the physiology of a lipophilic corynebacterium that lacks mycolic acids.</title>
        <authorList>
            <person name="Tauch A."/>
            <person name="Schneider J."/>
            <person name="Szczepanowski R."/>
            <person name="Tilker A."/>
            <person name="Viehoever P."/>
            <person name="Gartemann K.-H."/>
            <person name="Arnold W."/>
            <person name="Blom J."/>
            <person name="Brinkrolf K."/>
            <person name="Brune I."/>
            <person name="Goetker S."/>
            <person name="Weisshaar B."/>
            <person name="Goesmann A."/>
            <person name="Droege M."/>
            <person name="Puehler A."/>
        </authorList>
    </citation>
    <scope>NUCLEOTIDE SEQUENCE [LARGE SCALE GENOMIC DNA]</scope>
    <source>
        <strain>DSM 44385 / JCM 11950 / CIP 105744 / CCUG 35717</strain>
    </source>
</reference>
<organism>
    <name type="scientific">Corynebacterium kroppenstedtii (strain DSM 44385 / JCM 11950 / CIP 105744 / CCUG 35717)</name>
    <dbReference type="NCBI Taxonomy" id="645127"/>
    <lineage>
        <taxon>Bacteria</taxon>
        <taxon>Bacillati</taxon>
        <taxon>Actinomycetota</taxon>
        <taxon>Actinomycetes</taxon>
        <taxon>Mycobacteriales</taxon>
        <taxon>Corynebacteriaceae</taxon>
        <taxon>Corynebacterium</taxon>
    </lineage>
</organism>
<protein>
    <recommendedName>
        <fullName evidence="1">Enolase</fullName>
        <ecNumber evidence="1">4.2.1.11</ecNumber>
    </recommendedName>
    <alternativeName>
        <fullName evidence="1">2-phospho-D-glycerate hydro-lyase</fullName>
    </alternativeName>
    <alternativeName>
        <fullName evidence="1">2-phosphoglycerate dehydratase</fullName>
    </alternativeName>
</protein>
<feature type="chain" id="PRO_1000205086" description="Enolase">
    <location>
        <begin position="1"/>
        <end position="427"/>
    </location>
</feature>
<feature type="active site" description="Proton donor" evidence="1">
    <location>
        <position position="204"/>
    </location>
</feature>
<feature type="active site" description="Proton acceptor" evidence="1">
    <location>
        <position position="336"/>
    </location>
</feature>
<feature type="binding site" evidence="1">
    <location>
        <position position="162"/>
    </location>
    <ligand>
        <name>(2R)-2-phosphoglycerate</name>
        <dbReference type="ChEBI" id="CHEBI:58289"/>
    </ligand>
</feature>
<feature type="binding site" evidence="1">
    <location>
        <position position="241"/>
    </location>
    <ligand>
        <name>Mg(2+)</name>
        <dbReference type="ChEBI" id="CHEBI:18420"/>
    </ligand>
</feature>
<feature type="binding site" evidence="1">
    <location>
        <position position="284"/>
    </location>
    <ligand>
        <name>Mg(2+)</name>
        <dbReference type="ChEBI" id="CHEBI:18420"/>
    </ligand>
</feature>
<feature type="binding site" evidence="1">
    <location>
        <position position="311"/>
    </location>
    <ligand>
        <name>Mg(2+)</name>
        <dbReference type="ChEBI" id="CHEBI:18420"/>
    </ligand>
</feature>
<feature type="binding site" evidence="1">
    <location>
        <position position="336"/>
    </location>
    <ligand>
        <name>(2R)-2-phosphoglycerate</name>
        <dbReference type="ChEBI" id="CHEBI:58289"/>
    </ligand>
</feature>
<feature type="binding site" evidence="1">
    <location>
        <position position="365"/>
    </location>
    <ligand>
        <name>(2R)-2-phosphoglycerate</name>
        <dbReference type="ChEBI" id="CHEBI:58289"/>
    </ligand>
</feature>
<feature type="binding site" evidence="1">
    <location>
        <position position="366"/>
    </location>
    <ligand>
        <name>(2R)-2-phosphoglycerate</name>
        <dbReference type="ChEBI" id="CHEBI:58289"/>
    </ligand>
</feature>
<feature type="binding site" evidence="1">
    <location>
        <position position="387"/>
    </location>
    <ligand>
        <name>(2R)-2-phosphoglycerate</name>
        <dbReference type="ChEBI" id="CHEBI:58289"/>
    </ligand>
</feature>